<proteinExistence type="inferred from homology"/>
<accession>B5RLV6</accession>
<sequence>MGKKKGKGAVGLIALVCEETGIRNYTTTKNRRNTQEKLELMKYCPSLRKHTLHKEGKIK</sequence>
<organism>
    <name type="scientific">Borrelia duttonii (strain Ly)</name>
    <dbReference type="NCBI Taxonomy" id="412419"/>
    <lineage>
        <taxon>Bacteria</taxon>
        <taxon>Pseudomonadati</taxon>
        <taxon>Spirochaetota</taxon>
        <taxon>Spirochaetia</taxon>
        <taxon>Spirochaetales</taxon>
        <taxon>Borreliaceae</taxon>
        <taxon>Borrelia</taxon>
    </lineage>
</organism>
<feature type="chain" id="PRO_0000356403" description="Large ribosomal subunit protein bL33">
    <location>
        <begin position="1"/>
        <end position="59"/>
    </location>
</feature>
<evidence type="ECO:0000255" key="1">
    <source>
        <dbReference type="HAMAP-Rule" id="MF_00294"/>
    </source>
</evidence>
<evidence type="ECO:0000305" key="2"/>
<keyword id="KW-0687">Ribonucleoprotein</keyword>
<keyword id="KW-0689">Ribosomal protein</keyword>
<gene>
    <name evidence="1" type="primary">rpmG</name>
    <name type="ordered locus">BDU_391</name>
</gene>
<protein>
    <recommendedName>
        <fullName evidence="1">Large ribosomal subunit protein bL33</fullName>
    </recommendedName>
    <alternativeName>
        <fullName evidence="2">50S ribosomal protein L33</fullName>
    </alternativeName>
</protein>
<comment type="similarity">
    <text evidence="1">Belongs to the bacterial ribosomal protein bL33 family.</text>
</comment>
<reference key="1">
    <citation type="journal article" date="2008" name="PLoS Genet.">
        <title>The genome of Borrelia recurrentis, the agent of deadly louse-borne relapsing fever, is a degraded subset of tick-borne Borrelia duttonii.</title>
        <authorList>
            <person name="Lescot M."/>
            <person name="Audic S."/>
            <person name="Robert C."/>
            <person name="Nguyen T.T."/>
            <person name="Blanc G."/>
            <person name="Cutler S.J."/>
            <person name="Wincker P."/>
            <person name="Couloux A."/>
            <person name="Claverie J.-M."/>
            <person name="Raoult D."/>
            <person name="Drancourt M."/>
        </authorList>
    </citation>
    <scope>NUCLEOTIDE SEQUENCE [LARGE SCALE GENOMIC DNA]</scope>
    <source>
        <strain>Ly</strain>
    </source>
</reference>
<name>RL33_BORDL</name>
<dbReference type="EMBL" id="CP000976">
    <property type="protein sequence ID" value="ACH93342.1"/>
    <property type="molecule type" value="Genomic_DNA"/>
</dbReference>
<dbReference type="RefSeq" id="WP_012538153.1">
    <property type="nucleotide sequence ID" value="NC_011229.1"/>
</dbReference>
<dbReference type="SMR" id="B5RLV6"/>
<dbReference type="STRING" id="412419.BDU_391"/>
<dbReference type="KEGG" id="bdu:BDU_391"/>
<dbReference type="eggNOG" id="COG0267">
    <property type="taxonomic scope" value="Bacteria"/>
</dbReference>
<dbReference type="HOGENOM" id="CLU_190949_0_2_12"/>
<dbReference type="Proteomes" id="UP000000611">
    <property type="component" value="Chromosome"/>
</dbReference>
<dbReference type="GO" id="GO:0005737">
    <property type="term" value="C:cytoplasm"/>
    <property type="evidence" value="ECO:0007669"/>
    <property type="project" value="UniProtKB-ARBA"/>
</dbReference>
<dbReference type="GO" id="GO:1990904">
    <property type="term" value="C:ribonucleoprotein complex"/>
    <property type="evidence" value="ECO:0007669"/>
    <property type="project" value="UniProtKB-KW"/>
</dbReference>
<dbReference type="GO" id="GO:0005840">
    <property type="term" value="C:ribosome"/>
    <property type="evidence" value="ECO:0007669"/>
    <property type="project" value="UniProtKB-KW"/>
</dbReference>
<dbReference type="GO" id="GO:0003735">
    <property type="term" value="F:structural constituent of ribosome"/>
    <property type="evidence" value="ECO:0007669"/>
    <property type="project" value="InterPro"/>
</dbReference>
<dbReference type="GO" id="GO:0006412">
    <property type="term" value="P:translation"/>
    <property type="evidence" value="ECO:0007669"/>
    <property type="project" value="UniProtKB-UniRule"/>
</dbReference>
<dbReference type="Gene3D" id="2.20.28.120">
    <property type="entry name" value="Ribosomal protein L33"/>
    <property type="match status" value="1"/>
</dbReference>
<dbReference type="HAMAP" id="MF_00294">
    <property type="entry name" value="Ribosomal_bL33"/>
    <property type="match status" value="1"/>
</dbReference>
<dbReference type="InterPro" id="IPR001705">
    <property type="entry name" value="Ribosomal_bL33"/>
</dbReference>
<dbReference type="InterPro" id="IPR018264">
    <property type="entry name" value="Ribosomal_bL33_CS"/>
</dbReference>
<dbReference type="InterPro" id="IPR038584">
    <property type="entry name" value="Ribosomal_bL33_sf"/>
</dbReference>
<dbReference type="InterPro" id="IPR011332">
    <property type="entry name" value="Ribosomal_zn-bd"/>
</dbReference>
<dbReference type="NCBIfam" id="NF001764">
    <property type="entry name" value="PRK00504.1"/>
    <property type="match status" value="1"/>
</dbReference>
<dbReference type="NCBIfam" id="NF001860">
    <property type="entry name" value="PRK00595.1"/>
    <property type="match status" value="1"/>
</dbReference>
<dbReference type="NCBIfam" id="TIGR01023">
    <property type="entry name" value="rpmG_bact"/>
    <property type="match status" value="1"/>
</dbReference>
<dbReference type="PANTHER" id="PTHR43168">
    <property type="entry name" value="50S RIBOSOMAL PROTEIN L33, CHLOROPLASTIC"/>
    <property type="match status" value="1"/>
</dbReference>
<dbReference type="PANTHER" id="PTHR43168:SF2">
    <property type="entry name" value="LARGE RIBOSOMAL SUBUNIT PROTEIN BL33C"/>
    <property type="match status" value="1"/>
</dbReference>
<dbReference type="Pfam" id="PF00471">
    <property type="entry name" value="Ribosomal_L33"/>
    <property type="match status" value="1"/>
</dbReference>
<dbReference type="SUPFAM" id="SSF57829">
    <property type="entry name" value="Zn-binding ribosomal proteins"/>
    <property type="match status" value="1"/>
</dbReference>
<dbReference type="PROSITE" id="PS00582">
    <property type="entry name" value="RIBOSOMAL_L33"/>
    <property type="match status" value="1"/>
</dbReference>